<sequence>MSSAAPAKKPYRKAPPEHRELRLEIPVSRLEQEESLTDAERMKLLQQENEELRKRLASATRRTEALERELEIGQDCLELELGQSREELDKFKDKFRRLQNSYTASQRTNQELEDKLHALASLSHSWIFAIKKAEMDRKTLDWEIVELTNKLLDARNTINKLEELNERYRLDCNLAVQLLKCNKSHFRNHKLADLPCELQDMVRKHLRSGQEVASPSPSPSSSLSPGAVVPTSVIARVLEKPESLLLNSAQSGSAGRPLAEDVFVHVDMSGGDPASPPAPGSPNGECCSVSTAGGSPEEELPLPAFDKLSPYPTPSPPHPLYPGRKVIEFSEDKIRIPRNSPLPNCTYATRQAISLSLVEDGSERAHRSSVPSSPASAQGSPHHQPSPAPSALSAPASSASSEEDLLASWQRAFVDRTPPPAAVVQRTAFGRDSLPELQLHFSPGHSTAPPPSPHRERGLVLPAEPDSGFPQDEEEEMLNLPVSPEEERQSLLPDKEGTEEASGPSHVDGRAWPLPSPSRPQRSPKRMGVHHLHRKDSLTQAQEQGTVLS</sequence>
<comment type="function">
    <text evidence="5">Plays a role in regulating the structure of the Golgi apparatus.</text>
</comment>
<comment type="subunit">
    <text evidence="1 5">Interacts with DLG1 (By similarity). Interacts with ARF6 (GTP-bound form) (PubMed:22841714).</text>
</comment>
<comment type="interaction">
    <interactant intactId="EBI-775733">
        <id>Q9DCD5</id>
    </interactant>
    <interactant intactId="EBI-988682">
        <id>P62331</id>
        <label>Arf6</label>
    </interactant>
    <organismsDiffer>false</organismsDiffer>
    <experiments>2</experiments>
</comment>
<comment type="subcellular location">
    <subcellularLocation>
        <location evidence="4 5">Golgi apparatus</location>
        <location evidence="4 5">trans-Golgi network</location>
    </subcellularLocation>
    <subcellularLocation>
        <location evidence="4">Cell junction</location>
        <location evidence="4">Tight junction</location>
    </subcellularLocation>
    <subcellularLocation>
        <location evidence="5">Cell membrane</location>
        <topology evidence="7">Peripheral membrane protein</topology>
    </subcellularLocation>
    <text evidence="4">Recruited to tight junctions (TJ) during late stages of maturation of the TJ complexes. Excluded from adherens junctions and desmosomes.</text>
</comment>
<comment type="alternative products">
    <event type="alternative splicing"/>
    <isoform>
        <id>Q9DCD5-1</id>
        <name>1</name>
        <sequence type="displayed"/>
    </isoform>
    <isoform>
        <id>Q9DCD5-2</id>
        <name>2</name>
        <sequence type="described" ref="VSP_060915"/>
    </isoform>
</comment>
<comment type="tissue specificity">
    <text evidence="5">Widely expressed including in adult thymus, heart, lung, liver, small intestine, kidney, spleen, testis and skeletal muscle and in embryonic brain but not detected in adult brain (at protein level).</text>
</comment>
<organism>
    <name type="scientific">Mus musculus</name>
    <name type="common">Mouse</name>
    <dbReference type="NCBI Taxonomy" id="10090"/>
    <lineage>
        <taxon>Eukaryota</taxon>
        <taxon>Metazoa</taxon>
        <taxon>Chordata</taxon>
        <taxon>Craniata</taxon>
        <taxon>Vertebrata</taxon>
        <taxon>Euteleostomi</taxon>
        <taxon>Mammalia</taxon>
        <taxon>Eutheria</taxon>
        <taxon>Euarchontoglires</taxon>
        <taxon>Glires</taxon>
        <taxon>Rodentia</taxon>
        <taxon>Myomorpha</taxon>
        <taxon>Muroidea</taxon>
        <taxon>Muridae</taxon>
        <taxon>Murinae</taxon>
        <taxon>Mus</taxon>
        <taxon>Mus</taxon>
    </lineage>
</organism>
<evidence type="ECO:0000250" key="1">
    <source>
        <dbReference type="UniProtKB" id="Q5JTD0"/>
    </source>
</evidence>
<evidence type="ECO:0000255" key="2"/>
<evidence type="ECO:0000256" key="3">
    <source>
        <dbReference type="SAM" id="MobiDB-lite"/>
    </source>
</evidence>
<evidence type="ECO:0000269" key="4">
    <source>
    </source>
</evidence>
<evidence type="ECO:0000269" key="5">
    <source>
    </source>
</evidence>
<evidence type="ECO:0000303" key="6">
    <source>
    </source>
</evidence>
<evidence type="ECO:0000305" key="7"/>
<evidence type="ECO:0000312" key="8">
    <source>
        <dbReference type="EMBL" id="BAM29296.1"/>
    </source>
</evidence>
<evidence type="ECO:0000312" key="9">
    <source>
        <dbReference type="MGI" id="MGI:1921344"/>
    </source>
</evidence>
<evidence type="ECO:0000312" key="10">
    <source>
        <dbReference type="Proteomes" id="UP000000589"/>
    </source>
</evidence>
<evidence type="ECO:0007744" key="11">
    <source>
    </source>
</evidence>
<evidence type="ECO:0007744" key="12">
    <source>
    </source>
</evidence>
<keyword id="KW-0025">Alternative splicing</keyword>
<keyword id="KW-0965">Cell junction</keyword>
<keyword id="KW-1003">Cell membrane</keyword>
<keyword id="KW-0175">Coiled coil</keyword>
<keyword id="KW-0333">Golgi apparatus</keyword>
<keyword id="KW-0472">Membrane</keyword>
<keyword id="KW-0597">Phosphoprotein</keyword>
<keyword id="KW-1185">Reference proteome</keyword>
<keyword id="KW-0796">Tight junction</keyword>
<dbReference type="EMBL" id="AB712252">
    <property type="protein sequence ID" value="BAM29296.1"/>
    <property type="molecule type" value="mRNA"/>
</dbReference>
<dbReference type="EMBL" id="AK002882">
    <property type="protein sequence ID" value="BAB22429.1"/>
    <property type="molecule type" value="mRNA"/>
</dbReference>
<dbReference type="EMBL" id="AK169889">
    <property type="protein sequence ID" value="BAE41438.1"/>
    <property type="molecule type" value="mRNA"/>
</dbReference>
<dbReference type="EMBL" id="AC116739">
    <property type="status" value="NOT_ANNOTATED_CDS"/>
    <property type="molecule type" value="Genomic_DNA"/>
</dbReference>
<dbReference type="EMBL" id="BC023316">
    <property type="protein sequence ID" value="AAH23316.1"/>
    <property type="molecule type" value="mRNA"/>
</dbReference>
<dbReference type="EMBL" id="AF465982">
    <property type="protein sequence ID" value="AAL76253.1"/>
    <property type="molecule type" value="mRNA"/>
</dbReference>
<dbReference type="CCDS" id="CCDS28824.1">
    <molecule id="Q9DCD5-2"/>
</dbReference>
<dbReference type="RefSeq" id="NP_001239402.1">
    <molecule id="Q9DCD5-2"/>
    <property type="nucleotide sequence ID" value="NM_001252473.1"/>
</dbReference>
<dbReference type="RefSeq" id="NP_001239403.1">
    <molecule id="Q9DCD5-2"/>
    <property type="nucleotide sequence ID" value="NM_001252474.1"/>
</dbReference>
<dbReference type="RefSeq" id="NP_001239404.1">
    <molecule id="Q9DCD5-2"/>
    <property type="nucleotide sequence ID" value="NM_001252475.1"/>
</dbReference>
<dbReference type="RefSeq" id="NP_083027.1">
    <molecule id="Q9DCD5-2"/>
    <property type="nucleotide sequence ID" value="NM_028751.3"/>
</dbReference>
<dbReference type="RefSeq" id="XP_011244964.1">
    <molecule id="Q9DCD5-1"/>
    <property type="nucleotide sequence ID" value="XM_011246662.4"/>
</dbReference>
<dbReference type="RefSeq" id="XP_011244965.1">
    <molecule id="Q9DCD5-1"/>
    <property type="nucleotide sequence ID" value="XM_011246663.4"/>
</dbReference>
<dbReference type="RefSeq" id="XP_011244966.1">
    <molecule id="Q9DCD5-1"/>
    <property type="nucleotide sequence ID" value="XM_011246664.4"/>
</dbReference>
<dbReference type="RefSeq" id="XP_011244967.1">
    <molecule id="Q9DCD5-1"/>
    <property type="nucleotide sequence ID" value="XM_011246665.4"/>
</dbReference>
<dbReference type="RefSeq" id="XP_011244968.1">
    <molecule id="Q9DCD5-1"/>
    <property type="nucleotide sequence ID" value="XM_011246666.4"/>
</dbReference>
<dbReference type="RefSeq" id="XP_011244969.1">
    <molecule id="Q9DCD5-1"/>
    <property type="nucleotide sequence ID" value="XM_011246667.4"/>
</dbReference>
<dbReference type="RefSeq" id="XP_011244970.1">
    <molecule id="Q9DCD5-1"/>
    <property type="nucleotide sequence ID" value="XM_011246668.4"/>
</dbReference>
<dbReference type="RefSeq" id="XP_011244971.1">
    <molecule id="Q9DCD5-1"/>
    <property type="nucleotide sequence ID" value="XM_011246669.4"/>
</dbReference>
<dbReference type="RefSeq" id="XP_011244972.1">
    <molecule id="Q9DCD5-1"/>
    <property type="nucleotide sequence ID" value="XM_011246670.4"/>
</dbReference>
<dbReference type="RefSeq" id="XP_011244973.1">
    <molecule id="Q9DCD5-1"/>
    <property type="nucleotide sequence ID" value="XM_011246671.4"/>
</dbReference>
<dbReference type="RefSeq" id="XP_011244974.1">
    <molecule id="Q9DCD5-1"/>
    <property type="nucleotide sequence ID" value="XM_011246672.4"/>
</dbReference>
<dbReference type="RefSeq" id="XP_011244975.1">
    <molecule id="Q9DCD5-1"/>
    <property type="nucleotide sequence ID" value="XM_011246673.4"/>
</dbReference>
<dbReference type="RefSeq" id="XP_011244976.1">
    <molecule id="Q9DCD5-1"/>
    <property type="nucleotide sequence ID" value="XM_011246674.4"/>
</dbReference>
<dbReference type="RefSeq" id="XP_011244977.1">
    <molecule id="Q9DCD5-1"/>
    <property type="nucleotide sequence ID" value="XM_011246675.4"/>
</dbReference>
<dbReference type="RefSeq" id="XP_011244978.1">
    <molecule id="Q9DCD5-1"/>
    <property type="nucleotide sequence ID" value="XM_011246676.3"/>
</dbReference>
<dbReference type="RefSeq" id="XP_011244979.1">
    <molecule id="Q9DCD5-2"/>
    <property type="nucleotide sequence ID" value="XM_011246677.4"/>
</dbReference>
<dbReference type="SMR" id="Q9DCD5"/>
<dbReference type="BioGRID" id="216487">
    <property type="interactions" value="5"/>
</dbReference>
<dbReference type="FunCoup" id="Q9DCD5">
    <property type="interactions" value="1477"/>
</dbReference>
<dbReference type="IntAct" id="Q9DCD5">
    <property type="interactions" value="3"/>
</dbReference>
<dbReference type="MINT" id="Q9DCD5"/>
<dbReference type="STRING" id="10090.ENSMUSP00000130710"/>
<dbReference type="GlyGen" id="Q9DCD5">
    <property type="glycosylation" value="1 site"/>
</dbReference>
<dbReference type="iPTMnet" id="Q9DCD5"/>
<dbReference type="PhosphoSitePlus" id="Q9DCD5"/>
<dbReference type="jPOST" id="Q9DCD5"/>
<dbReference type="PaxDb" id="10090-ENSMUSP00000130710"/>
<dbReference type="ProteomicsDB" id="259511"/>
<dbReference type="ProteomicsDB" id="332631"/>
<dbReference type="Pumba" id="Q9DCD5"/>
<dbReference type="Antibodypedia" id="16501">
    <property type="antibodies" value="142 antibodies from 24 providers"/>
</dbReference>
<dbReference type="DNASU" id="74094"/>
<dbReference type="Ensembl" id="ENSMUST00000012440.14">
    <molecule id="Q9DCD5-2"/>
    <property type="protein sequence ID" value="ENSMUSP00000012440.7"/>
    <property type="gene ID" value="ENSMUSG00000012296.17"/>
</dbReference>
<dbReference type="Ensembl" id="ENSMUST00000164342.10">
    <molecule id="Q9DCD5-2"/>
    <property type="protein sequence ID" value="ENSMUSP00000130710.3"/>
    <property type="gene ID" value="ENSMUSG00000012296.17"/>
</dbReference>
<dbReference type="Ensembl" id="ENSMUST00000180283.2">
    <molecule id="Q9DCD5-2"/>
    <property type="protein sequence ID" value="ENSMUSP00000137220.2"/>
    <property type="gene ID" value="ENSMUSG00000012296.17"/>
</dbReference>
<dbReference type="Ensembl" id="ENSMUST00000225080.2">
    <molecule id="Q9DCD5-2"/>
    <property type="protein sequence ID" value="ENSMUSP00000153327.2"/>
    <property type="gene ID" value="ENSMUSG00000012296.17"/>
</dbReference>
<dbReference type="Ensembl" id="ENSMUST00000225413.2">
    <molecule id="Q9DCD5-1"/>
    <property type="protein sequence ID" value="ENSMUSP00000153632.2"/>
    <property type="gene ID" value="ENSMUSG00000012296.17"/>
</dbReference>
<dbReference type="GeneID" id="74094"/>
<dbReference type="KEGG" id="mmu:74094"/>
<dbReference type="UCSC" id="uc008csf.2">
    <molecule id="Q9DCD5-1"/>
    <property type="organism name" value="mouse"/>
</dbReference>
<dbReference type="UCSC" id="uc033hee.1">
    <property type="organism name" value="mouse"/>
</dbReference>
<dbReference type="AGR" id="MGI:1921344"/>
<dbReference type="CTD" id="93643"/>
<dbReference type="MGI" id="MGI:1921344">
    <property type="gene designation" value="Tjap1"/>
</dbReference>
<dbReference type="VEuPathDB" id="HostDB:ENSMUSG00000012296"/>
<dbReference type="eggNOG" id="ENOG502QRZ1">
    <property type="taxonomic scope" value="Eukaryota"/>
</dbReference>
<dbReference type="GeneTree" id="ENSGT00940000161543"/>
<dbReference type="HOGENOM" id="CLU_032139_0_0_1"/>
<dbReference type="InParanoid" id="Q9DCD5"/>
<dbReference type="OMA" id="VHVDMTC"/>
<dbReference type="OrthoDB" id="10068192at2759"/>
<dbReference type="PhylomeDB" id="Q9DCD5"/>
<dbReference type="TreeFam" id="TF331612"/>
<dbReference type="BioGRID-ORCS" id="74094">
    <property type="hits" value="3 hits in 78 CRISPR screens"/>
</dbReference>
<dbReference type="ChiTaRS" id="Tjap1">
    <property type="organism name" value="mouse"/>
</dbReference>
<dbReference type="PRO" id="PR:Q9DCD5"/>
<dbReference type="Proteomes" id="UP000000589">
    <property type="component" value="Chromosome 17"/>
</dbReference>
<dbReference type="RNAct" id="Q9DCD5">
    <property type="molecule type" value="protein"/>
</dbReference>
<dbReference type="Bgee" id="ENSMUSG00000012296">
    <property type="expression patterns" value="Expressed in hindlimb stylopod muscle and 240 other cell types or tissues"/>
</dbReference>
<dbReference type="ExpressionAtlas" id="Q9DCD5">
    <property type="expression patterns" value="baseline and differential"/>
</dbReference>
<dbReference type="GO" id="GO:0005923">
    <property type="term" value="C:bicellular tight junction"/>
    <property type="evidence" value="ECO:0000266"/>
    <property type="project" value="MGI"/>
</dbReference>
<dbReference type="GO" id="GO:0005737">
    <property type="term" value="C:cytoplasm"/>
    <property type="evidence" value="ECO:0000314"/>
    <property type="project" value="MGI"/>
</dbReference>
<dbReference type="GO" id="GO:0005768">
    <property type="term" value="C:endosome"/>
    <property type="evidence" value="ECO:0000314"/>
    <property type="project" value="MGI"/>
</dbReference>
<dbReference type="GO" id="GO:0005886">
    <property type="term" value="C:plasma membrane"/>
    <property type="evidence" value="ECO:0000314"/>
    <property type="project" value="MGI"/>
</dbReference>
<dbReference type="GO" id="GO:0005802">
    <property type="term" value="C:trans-Golgi network"/>
    <property type="evidence" value="ECO:0000314"/>
    <property type="project" value="MGI"/>
</dbReference>
<dbReference type="GO" id="GO:0007030">
    <property type="term" value="P:Golgi organization"/>
    <property type="evidence" value="ECO:0000315"/>
    <property type="project" value="MGI"/>
</dbReference>
<dbReference type="InterPro" id="IPR043441">
    <property type="entry name" value="Tjap1/BEGAIN"/>
</dbReference>
<dbReference type="InterPro" id="IPR043470">
    <property type="entry name" value="Tjap1_dom"/>
</dbReference>
<dbReference type="PANTHER" id="PTHR28664">
    <property type="entry name" value="TIGHT JUNCTION-ASSOCIATED PROTEIN 1"/>
    <property type="match status" value="1"/>
</dbReference>
<dbReference type="PANTHER" id="PTHR28664:SF3">
    <property type="entry name" value="TIGHT JUNCTION-ASSOCIATED PROTEIN 1"/>
    <property type="match status" value="1"/>
</dbReference>
<dbReference type="Pfam" id="PF15453">
    <property type="entry name" value="Pilt"/>
    <property type="match status" value="2"/>
</dbReference>
<accession>Q9DCD5</accession>
<accession>I7H459</accession>
<accession>Q8CFL7</accession>
<accession>Q8R5I2</accession>
<reference evidence="8" key="1">
    <citation type="journal article" date="2012" name="FEBS Lett.">
        <title>Pilt is a coiled-coil domain-containing protein that localizes at the trans-Golgi complex and regulates its structure.</title>
        <authorList>
            <person name="Tamaki H."/>
            <person name="Sanda M."/>
            <person name="Katsumata O."/>
            <person name="Hara Y."/>
            <person name="Fukaya M."/>
            <person name="Sakagami H."/>
        </authorList>
    </citation>
    <scope>NUCLEOTIDE SEQUENCE [MRNA] (ISOFORM 1)</scope>
    <scope>FUNCTION</scope>
    <scope>INTERACTION WITH ARF6</scope>
    <scope>SUBCELLULAR LOCATION</scope>
    <scope>TISSUE SPECIFICITY</scope>
    <source>
        <strain evidence="8">BALB/cJ</strain>
        <tissue evidence="8">Brain</tissue>
    </source>
</reference>
<reference key="2">
    <citation type="journal article" date="2005" name="Science">
        <title>The transcriptional landscape of the mammalian genome.</title>
        <authorList>
            <person name="Carninci P."/>
            <person name="Kasukawa T."/>
            <person name="Katayama S."/>
            <person name="Gough J."/>
            <person name="Frith M.C."/>
            <person name="Maeda N."/>
            <person name="Oyama R."/>
            <person name="Ravasi T."/>
            <person name="Lenhard B."/>
            <person name="Wells C."/>
            <person name="Kodzius R."/>
            <person name="Shimokawa K."/>
            <person name="Bajic V.B."/>
            <person name="Brenner S.E."/>
            <person name="Batalov S."/>
            <person name="Forrest A.R."/>
            <person name="Zavolan M."/>
            <person name="Davis M.J."/>
            <person name="Wilming L.G."/>
            <person name="Aidinis V."/>
            <person name="Allen J.E."/>
            <person name="Ambesi-Impiombato A."/>
            <person name="Apweiler R."/>
            <person name="Aturaliya R.N."/>
            <person name="Bailey T.L."/>
            <person name="Bansal M."/>
            <person name="Baxter L."/>
            <person name="Beisel K.W."/>
            <person name="Bersano T."/>
            <person name="Bono H."/>
            <person name="Chalk A.M."/>
            <person name="Chiu K.P."/>
            <person name="Choudhary V."/>
            <person name="Christoffels A."/>
            <person name="Clutterbuck D.R."/>
            <person name="Crowe M.L."/>
            <person name="Dalla E."/>
            <person name="Dalrymple B.P."/>
            <person name="de Bono B."/>
            <person name="Della Gatta G."/>
            <person name="di Bernardo D."/>
            <person name="Down T."/>
            <person name="Engstrom P."/>
            <person name="Fagiolini M."/>
            <person name="Faulkner G."/>
            <person name="Fletcher C.F."/>
            <person name="Fukushima T."/>
            <person name="Furuno M."/>
            <person name="Futaki S."/>
            <person name="Gariboldi M."/>
            <person name="Georgii-Hemming P."/>
            <person name="Gingeras T.R."/>
            <person name="Gojobori T."/>
            <person name="Green R.E."/>
            <person name="Gustincich S."/>
            <person name="Harbers M."/>
            <person name="Hayashi Y."/>
            <person name="Hensch T.K."/>
            <person name="Hirokawa N."/>
            <person name="Hill D."/>
            <person name="Huminiecki L."/>
            <person name="Iacono M."/>
            <person name="Ikeo K."/>
            <person name="Iwama A."/>
            <person name="Ishikawa T."/>
            <person name="Jakt M."/>
            <person name="Kanapin A."/>
            <person name="Katoh M."/>
            <person name="Kawasawa Y."/>
            <person name="Kelso J."/>
            <person name="Kitamura H."/>
            <person name="Kitano H."/>
            <person name="Kollias G."/>
            <person name="Krishnan S.P."/>
            <person name="Kruger A."/>
            <person name="Kummerfeld S.K."/>
            <person name="Kurochkin I.V."/>
            <person name="Lareau L.F."/>
            <person name="Lazarevic D."/>
            <person name="Lipovich L."/>
            <person name="Liu J."/>
            <person name="Liuni S."/>
            <person name="McWilliam S."/>
            <person name="Madan Babu M."/>
            <person name="Madera M."/>
            <person name="Marchionni L."/>
            <person name="Matsuda H."/>
            <person name="Matsuzawa S."/>
            <person name="Miki H."/>
            <person name="Mignone F."/>
            <person name="Miyake S."/>
            <person name="Morris K."/>
            <person name="Mottagui-Tabar S."/>
            <person name="Mulder N."/>
            <person name="Nakano N."/>
            <person name="Nakauchi H."/>
            <person name="Ng P."/>
            <person name="Nilsson R."/>
            <person name="Nishiguchi S."/>
            <person name="Nishikawa S."/>
            <person name="Nori F."/>
            <person name="Ohara O."/>
            <person name="Okazaki Y."/>
            <person name="Orlando V."/>
            <person name="Pang K.C."/>
            <person name="Pavan W.J."/>
            <person name="Pavesi G."/>
            <person name="Pesole G."/>
            <person name="Petrovsky N."/>
            <person name="Piazza S."/>
            <person name="Reed J."/>
            <person name="Reid J.F."/>
            <person name="Ring B.Z."/>
            <person name="Ringwald M."/>
            <person name="Rost B."/>
            <person name="Ruan Y."/>
            <person name="Salzberg S.L."/>
            <person name="Sandelin A."/>
            <person name="Schneider C."/>
            <person name="Schoenbach C."/>
            <person name="Sekiguchi K."/>
            <person name="Semple C.A."/>
            <person name="Seno S."/>
            <person name="Sessa L."/>
            <person name="Sheng Y."/>
            <person name="Shibata Y."/>
            <person name="Shimada H."/>
            <person name="Shimada K."/>
            <person name="Silva D."/>
            <person name="Sinclair B."/>
            <person name="Sperling S."/>
            <person name="Stupka E."/>
            <person name="Sugiura K."/>
            <person name="Sultana R."/>
            <person name="Takenaka Y."/>
            <person name="Taki K."/>
            <person name="Tammoja K."/>
            <person name="Tan S.L."/>
            <person name="Tang S."/>
            <person name="Taylor M.S."/>
            <person name="Tegner J."/>
            <person name="Teichmann S.A."/>
            <person name="Ueda H.R."/>
            <person name="van Nimwegen E."/>
            <person name="Verardo R."/>
            <person name="Wei C.L."/>
            <person name="Yagi K."/>
            <person name="Yamanishi H."/>
            <person name="Zabarovsky E."/>
            <person name="Zhu S."/>
            <person name="Zimmer A."/>
            <person name="Hide W."/>
            <person name="Bult C."/>
            <person name="Grimmond S.M."/>
            <person name="Teasdale R.D."/>
            <person name="Liu E.T."/>
            <person name="Brusic V."/>
            <person name="Quackenbush J."/>
            <person name="Wahlestedt C."/>
            <person name="Mattick J.S."/>
            <person name="Hume D.A."/>
            <person name="Kai C."/>
            <person name="Sasaki D."/>
            <person name="Tomaru Y."/>
            <person name="Fukuda S."/>
            <person name="Kanamori-Katayama M."/>
            <person name="Suzuki M."/>
            <person name="Aoki J."/>
            <person name="Arakawa T."/>
            <person name="Iida J."/>
            <person name="Imamura K."/>
            <person name="Itoh M."/>
            <person name="Kato T."/>
            <person name="Kawaji H."/>
            <person name="Kawagashira N."/>
            <person name="Kawashima T."/>
            <person name="Kojima M."/>
            <person name="Kondo S."/>
            <person name="Konno H."/>
            <person name="Nakano K."/>
            <person name="Ninomiya N."/>
            <person name="Nishio T."/>
            <person name="Okada M."/>
            <person name="Plessy C."/>
            <person name="Shibata K."/>
            <person name="Shiraki T."/>
            <person name="Suzuki S."/>
            <person name="Tagami M."/>
            <person name="Waki K."/>
            <person name="Watahiki A."/>
            <person name="Okamura-Oho Y."/>
            <person name="Suzuki H."/>
            <person name="Kawai J."/>
            <person name="Hayashizaki Y."/>
        </authorList>
    </citation>
    <scope>NUCLEOTIDE SEQUENCE [LARGE SCALE MRNA] (ISOFORM 2)</scope>
    <source>
        <strain>C57BL/6J</strain>
        <tissue>Kidney</tissue>
    </source>
</reference>
<reference evidence="10" key="3">
    <citation type="journal article" date="2009" name="PLoS Biol.">
        <title>Lineage-specific biology revealed by a finished genome assembly of the mouse.</title>
        <authorList>
            <person name="Church D.M."/>
            <person name="Goodstadt L."/>
            <person name="Hillier L.W."/>
            <person name="Zody M.C."/>
            <person name="Goldstein S."/>
            <person name="She X."/>
            <person name="Bult C.J."/>
            <person name="Agarwala R."/>
            <person name="Cherry J.L."/>
            <person name="DiCuccio M."/>
            <person name="Hlavina W."/>
            <person name="Kapustin Y."/>
            <person name="Meric P."/>
            <person name="Maglott D."/>
            <person name="Birtle Z."/>
            <person name="Marques A.C."/>
            <person name="Graves T."/>
            <person name="Zhou S."/>
            <person name="Teague B."/>
            <person name="Potamousis K."/>
            <person name="Churas C."/>
            <person name="Place M."/>
            <person name="Herschleb J."/>
            <person name="Runnheim R."/>
            <person name="Forrest D."/>
            <person name="Amos-Landgraf J."/>
            <person name="Schwartz D.C."/>
            <person name="Cheng Z."/>
            <person name="Lindblad-Toh K."/>
            <person name="Eichler E.E."/>
            <person name="Ponting C.P."/>
        </authorList>
    </citation>
    <scope>NUCLEOTIDE SEQUENCE [LARGE SCALE GENOMIC DNA]</scope>
    <source>
        <strain evidence="10">C57BL/6J</strain>
    </source>
</reference>
<reference key="4">
    <citation type="journal article" date="2004" name="Genome Res.">
        <title>The status, quality, and expansion of the NIH full-length cDNA project: the Mammalian Gene Collection (MGC).</title>
        <authorList>
            <consortium name="The MGC Project Team"/>
        </authorList>
    </citation>
    <scope>NUCLEOTIDE SEQUENCE [LARGE SCALE MRNA] (ISOFORM 2)</scope>
    <source>
        <strain>FVB/N</strain>
        <tissue>Mammary tumor</tissue>
    </source>
</reference>
<reference key="5">
    <citation type="journal article" date="2001" name="J. Biol. Chem.">
        <title>Pilt, a novel peripheral membrane protein at tight junctions in epithelial cells.</title>
        <authorList>
            <person name="Kawabe H."/>
            <person name="Nakanishi H."/>
            <person name="Asada M."/>
            <person name="Fukuhara A."/>
            <person name="Morimoto K."/>
            <person name="Takeuchi M."/>
            <person name="Takai Y."/>
        </authorList>
    </citation>
    <scope>NUCLEOTIDE SEQUENCE [MRNA] OF 355-549</scope>
    <scope>SUBCELLULAR LOCATION</scope>
    <source>
        <strain>Swiss Webster / NIH</strain>
    </source>
</reference>
<reference key="6">
    <citation type="journal article" date="2009" name="Mol. Cell. Proteomics">
        <title>Large scale localization of protein phosphorylation by use of electron capture dissociation mass spectrometry.</title>
        <authorList>
            <person name="Sweet S.M."/>
            <person name="Bailey C.M."/>
            <person name="Cunningham D.L."/>
            <person name="Heath J.K."/>
            <person name="Cooper H.J."/>
        </authorList>
    </citation>
    <scope>PHOSPHORYLATION [LARGE SCALE ANALYSIS] AT THR-417</scope>
    <scope>IDENTIFICATION BY MASS SPECTROMETRY [LARGE SCALE ANALYSIS]</scope>
    <source>
        <tissue>Embryonic fibroblast</tissue>
    </source>
</reference>
<reference key="7">
    <citation type="journal article" date="2010" name="Cell">
        <title>A tissue-specific atlas of mouse protein phosphorylation and expression.</title>
        <authorList>
            <person name="Huttlin E.L."/>
            <person name="Jedrychowski M.P."/>
            <person name="Elias J.E."/>
            <person name="Goswami T."/>
            <person name="Rad R."/>
            <person name="Beausoleil S.A."/>
            <person name="Villen J."/>
            <person name="Haas W."/>
            <person name="Sowa M.E."/>
            <person name="Gygi S.P."/>
        </authorList>
    </citation>
    <scope>PHOSPHORYLATION [LARGE SCALE ANALYSIS] AT THR-417 AND SER-537</scope>
    <scope>IDENTIFICATION BY MASS SPECTROMETRY [LARGE SCALE ANALYSIS]</scope>
    <source>
        <tissue>Brain</tissue>
        <tissue>Brown adipose tissue</tissue>
        <tissue>Heart</tissue>
        <tissue>Kidney</tissue>
        <tissue>Liver</tissue>
        <tissue>Lung</tissue>
        <tissue>Pancreas</tissue>
        <tissue>Spleen</tissue>
        <tissue>Testis</tissue>
    </source>
</reference>
<gene>
    <name evidence="9" type="primary">Tjap1</name>
    <name evidence="6" type="synonym">Pilt</name>
    <name type="synonym">Tjp4</name>
</gene>
<feature type="chain" id="PRO_0000072551" description="Tight junction-associated protein 1">
    <location>
        <begin position="1"/>
        <end position="549"/>
    </location>
</feature>
<feature type="region of interest" description="Disordered" evidence="3">
    <location>
        <begin position="1"/>
        <end position="34"/>
    </location>
</feature>
<feature type="region of interest" description="Disordered" evidence="3">
    <location>
        <begin position="207"/>
        <end position="226"/>
    </location>
</feature>
<feature type="region of interest" description="Disordered" evidence="3">
    <location>
        <begin position="266"/>
        <end position="322"/>
    </location>
</feature>
<feature type="region of interest" description="Disordered" evidence="3">
    <location>
        <begin position="359"/>
        <end position="404"/>
    </location>
</feature>
<feature type="region of interest" description="Disordered" evidence="3">
    <location>
        <begin position="410"/>
        <end position="429"/>
    </location>
</feature>
<feature type="region of interest" description="Disordered" evidence="3">
    <location>
        <begin position="434"/>
        <end position="549"/>
    </location>
</feature>
<feature type="coiled-coil region" evidence="2">
    <location>
        <begin position="42"/>
        <end position="171"/>
    </location>
</feature>
<feature type="compositionally biased region" description="Basic and acidic residues" evidence="3">
    <location>
        <begin position="14"/>
        <end position="23"/>
    </location>
</feature>
<feature type="compositionally biased region" description="Pro residues" evidence="3">
    <location>
        <begin position="311"/>
        <end position="320"/>
    </location>
</feature>
<feature type="compositionally biased region" description="Polar residues" evidence="3">
    <location>
        <begin position="369"/>
        <end position="383"/>
    </location>
</feature>
<feature type="compositionally biased region" description="Low complexity" evidence="3">
    <location>
        <begin position="389"/>
        <end position="400"/>
    </location>
</feature>
<feature type="compositionally biased region" description="Basic and acidic residues" evidence="3">
    <location>
        <begin position="485"/>
        <end position="498"/>
    </location>
</feature>
<feature type="compositionally biased region" description="Basic residues" evidence="3">
    <location>
        <begin position="522"/>
        <end position="534"/>
    </location>
</feature>
<feature type="compositionally biased region" description="Polar residues" evidence="3">
    <location>
        <begin position="538"/>
        <end position="549"/>
    </location>
</feature>
<feature type="modified residue" description="Phosphoserine" evidence="1">
    <location>
        <position position="295"/>
    </location>
</feature>
<feature type="modified residue" description="Phosphothreonine" evidence="1">
    <location>
        <position position="313"/>
    </location>
</feature>
<feature type="modified residue" description="Phosphoserine" evidence="1">
    <location>
        <position position="315"/>
    </location>
</feature>
<feature type="modified residue" description="Phosphoserine" evidence="1">
    <location>
        <position position="340"/>
    </location>
</feature>
<feature type="modified residue" description="Phosphothreonine" evidence="11 12">
    <location>
        <position position="417"/>
    </location>
</feature>
<feature type="modified residue" description="Phosphoserine" evidence="1">
    <location>
        <position position="483"/>
    </location>
</feature>
<feature type="modified residue" description="Phosphoserine" evidence="12">
    <location>
        <position position="537"/>
    </location>
</feature>
<feature type="splice variant" id="VSP_060915" description="In isoform 2." evidence="7">
    <location>
        <begin position="120"/>
        <end position="129"/>
    </location>
</feature>
<feature type="sequence conflict" description="In Ref. 2; BAE41438 and 4; AAH23316." evidence="7" ref="2 4">
    <original>A</original>
    <variation>S</variation>
    <location>
        <position position="365"/>
    </location>
</feature>
<protein>
    <recommendedName>
        <fullName>Tight junction-associated protein 1</fullName>
    </recommendedName>
    <alternativeName>
        <fullName>Protein incorporated later into tight junctions</fullName>
    </alternativeName>
    <alternativeName>
        <fullName>Tight junction protein 4</fullName>
    </alternativeName>
</protein>
<proteinExistence type="evidence at protein level"/>
<name>TJAP1_MOUSE</name>